<reference key="1">
    <citation type="journal article" date="2002" name="Proc. Natl. Acad. Sci. U.S.A.">
        <title>Extensive mosaic structure revealed by the complete genome sequence of uropathogenic Escherichia coli.</title>
        <authorList>
            <person name="Welch R.A."/>
            <person name="Burland V."/>
            <person name="Plunkett G. III"/>
            <person name="Redford P."/>
            <person name="Roesch P."/>
            <person name="Rasko D."/>
            <person name="Buckles E.L."/>
            <person name="Liou S.-R."/>
            <person name="Boutin A."/>
            <person name="Hackett J."/>
            <person name="Stroud D."/>
            <person name="Mayhew G.F."/>
            <person name="Rose D.J."/>
            <person name="Zhou S."/>
            <person name="Schwartz D.C."/>
            <person name="Perna N.T."/>
            <person name="Mobley H.L.T."/>
            <person name="Donnenberg M.S."/>
            <person name="Blattner F.R."/>
        </authorList>
    </citation>
    <scope>NUCLEOTIDE SEQUENCE [LARGE SCALE GENOMIC DNA]</scope>
    <source>
        <strain>CFT073 / ATCC 700928 / UPEC</strain>
    </source>
</reference>
<accession>P0AB62</accession>
<accession>P46132</accession>
<accession>P77447</accession>
<dbReference type="EMBL" id="AE014075">
    <property type="protein sequence ID" value="AAN80205.1"/>
    <property type="molecule type" value="Genomic_DNA"/>
</dbReference>
<dbReference type="RefSeq" id="WP_001031530.1">
    <property type="nucleotide sequence ID" value="NZ_CP051263.1"/>
</dbReference>
<dbReference type="SMR" id="P0AB62"/>
<dbReference type="STRING" id="199310.c1739"/>
<dbReference type="KEGG" id="ecc:c1739"/>
<dbReference type="eggNOG" id="ENOG5032SBA">
    <property type="taxonomic scope" value="Bacteria"/>
</dbReference>
<dbReference type="HOGENOM" id="CLU_164128_0_0_6"/>
<dbReference type="BioCyc" id="ECOL199310:C1739-MONOMER"/>
<dbReference type="Proteomes" id="UP000001410">
    <property type="component" value="Chromosome"/>
</dbReference>
<dbReference type="FunFam" id="3.30.300.360:FF:000001">
    <property type="entry name" value="DUF2498 family protein"/>
    <property type="match status" value="1"/>
</dbReference>
<dbReference type="Gene3D" id="3.30.300.360">
    <property type="entry name" value="Protein of unknown function (DUF2498)"/>
    <property type="match status" value="1"/>
</dbReference>
<dbReference type="InterPro" id="IPR019633">
    <property type="entry name" value="DUF2498"/>
</dbReference>
<dbReference type="InterPro" id="IPR038191">
    <property type="entry name" value="YciN_sf"/>
</dbReference>
<dbReference type="NCBIfam" id="NF008265">
    <property type="entry name" value="PRK11037.1"/>
    <property type="match status" value="1"/>
</dbReference>
<dbReference type="Pfam" id="PF10692">
    <property type="entry name" value="DUF2498"/>
    <property type="match status" value="1"/>
</dbReference>
<name>YCIN_ECOL6</name>
<protein>
    <recommendedName>
        <fullName>Protein YciN</fullName>
    </recommendedName>
</protein>
<feature type="chain" id="PRO_0000168882" description="Protein YciN">
    <location>
        <begin position="1"/>
        <end position="83"/>
    </location>
</feature>
<organism>
    <name type="scientific">Escherichia coli O6:H1 (strain CFT073 / ATCC 700928 / UPEC)</name>
    <dbReference type="NCBI Taxonomy" id="199310"/>
    <lineage>
        <taxon>Bacteria</taxon>
        <taxon>Pseudomonadati</taxon>
        <taxon>Pseudomonadota</taxon>
        <taxon>Gammaproteobacteria</taxon>
        <taxon>Enterobacterales</taxon>
        <taxon>Enterobacteriaceae</taxon>
        <taxon>Escherichia</taxon>
    </lineage>
</organism>
<proteinExistence type="predicted"/>
<sequence length="83" mass="9386">MNKETQPIDRETLLKEANKIIREHEDTLAGIEATGVTQRNGVLVFTGDYFLDEQGLPTAKSTAVFNMFKHLAHVLSEKYHLVD</sequence>
<gene>
    <name type="primary">yciN</name>
    <name type="ordered locus">c1739</name>
</gene>
<keyword id="KW-1185">Reference proteome</keyword>